<comment type="function">
    <text evidence="1">Most effectively accelerate the intrinsic GTPase activity of YPT7. It is also active, but to a lesser extent, on YPT31, YPT32 and YPT1. YPT6 and SEC4 (By similarity).</text>
</comment>
<keyword id="KW-0343">GTPase activation</keyword>
<keyword id="KW-1185">Reference proteome</keyword>
<name>GYP7_YARLI</name>
<gene>
    <name type="primary">GYP7</name>
    <name type="ordered locus">YALI0F31911g</name>
</gene>
<proteinExistence type="inferred from homology"/>
<sequence length="730" mass="84026">MNSLWPVSVSHTQLTSINHQVYVHPTPSSKDNIPGFLALAKPRGATTDKEILVAWIPESKLQESAADFESYVKVDIKESGTPASSSLNLAETLVSPPPSSSFSSYAFSIPISDIFSLQVKQPSLGWWWGSITIHTRSKEDQLPPLYFHDAESQSTIMEQKRRNKKFETFDSESGSSMFWGGDHFIQVLSKYANLERAESDHSFLLVNPREGDAERFGTNLTGGSEEPSQLVAGIPGRGAGGDPVDRGAQVQKAFSDIRWGLLSNLAKVTQLTRKVSQGVWDSSPQPVKQLLMKPEVKKIGDDFDSARIYLAKWALSVAEESQRAKLKVLFDDELRELVSDEGFELIDAENNPQRRNEVSLAEWNAFFDYNGRLIVTVNEVKERIFHGGLAPAVRPEGWLFLLGVYPWDSTAAERKELVSKLRVDYNRLKKEWWVQEDKERDDFWRDQLSRIEKDVHRTDRNITFFAECDAKKDGDDDNYDKDEFGFSSQINSNIHLIQLRDMLITYNQHNKNLGYVQGMSDLLSPLYVVLQDDTLAFWAFSAFMERMERNYLRDQSGMRNQLLCLDHLVQFMLPSLYKHLEKTESTNLFFFFRMLLVWFKRELLWDDVLRLWEVLWTDYLSSQFVLFVCLAILDKHKDVMIDHLAGFDEILKYMNELSMTIDLDELLVRAELLFYRFRRTVELIDRKNEDRRNSADGSEPVSITEDLRELLSRKVIVVREGERPEGVMGG</sequence>
<protein>
    <recommendedName>
        <fullName>GTPase-activating protein GYP7</fullName>
    </recommendedName>
    <alternativeName>
        <fullName>GAP for YPT7</fullName>
    </alternativeName>
</protein>
<evidence type="ECO:0000250" key="1"/>
<evidence type="ECO:0000255" key="2">
    <source>
        <dbReference type="PROSITE-ProRule" id="PRU00163"/>
    </source>
</evidence>
<evidence type="ECO:0000305" key="3"/>
<dbReference type="EMBL" id="AJ001414">
    <property type="protein sequence ID" value="CAA04749.1"/>
    <property type="molecule type" value="Genomic_DNA"/>
</dbReference>
<dbReference type="EMBL" id="CR382132">
    <property type="protein sequence ID" value="CAG78927.1"/>
    <property type="molecule type" value="Genomic_DNA"/>
</dbReference>
<dbReference type="EMBL" id="M17741">
    <property type="protein sequence ID" value="AAA35241.1"/>
    <property type="molecule type" value="Genomic_DNA"/>
</dbReference>
<dbReference type="PIR" id="B26955">
    <property type="entry name" value="B26955"/>
</dbReference>
<dbReference type="RefSeq" id="XP_506113.1">
    <property type="nucleotide sequence ID" value="XM_506113.1"/>
</dbReference>
<dbReference type="SMR" id="P09379"/>
<dbReference type="FunCoup" id="P09379">
    <property type="interactions" value="65"/>
</dbReference>
<dbReference type="STRING" id="284591.P09379"/>
<dbReference type="EnsemblFungi" id="CAG78927">
    <property type="protein sequence ID" value="CAG78927"/>
    <property type="gene ID" value="YALI0_F31911g"/>
</dbReference>
<dbReference type="KEGG" id="yli:2907695"/>
<dbReference type="VEuPathDB" id="FungiDB:YALI0_F31911g"/>
<dbReference type="HOGENOM" id="CLU_004457_0_1_1"/>
<dbReference type="InParanoid" id="P09379"/>
<dbReference type="OMA" id="WWREQRG"/>
<dbReference type="OrthoDB" id="88623at4891"/>
<dbReference type="Proteomes" id="UP000001300">
    <property type="component" value="Chromosome F"/>
</dbReference>
<dbReference type="GO" id="GO:0005737">
    <property type="term" value="C:cytoplasm"/>
    <property type="evidence" value="ECO:0007669"/>
    <property type="project" value="UniProtKB-ARBA"/>
</dbReference>
<dbReference type="GO" id="GO:0005096">
    <property type="term" value="F:GTPase activator activity"/>
    <property type="evidence" value="ECO:0000318"/>
    <property type="project" value="GO_Central"/>
</dbReference>
<dbReference type="FunFam" id="1.10.472.80:FF:000005">
    <property type="entry name" value="TBC1 domain family member 15"/>
    <property type="match status" value="1"/>
</dbReference>
<dbReference type="Gene3D" id="1.10.8.270">
    <property type="entry name" value="putative rabgap domain of human tbc1 domain family member 14 like domains"/>
    <property type="match status" value="1"/>
</dbReference>
<dbReference type="Gene3D" id="1.10.472.80">
    <property type="entry name" value="Ypt/Rab-GAP domain of gyp1p, domain 3"/>
    <property type="match status" value="1"/>
</dbReference>
<dbReference type="InterPro" id="IPR000195">
    <property type="entry name" value="Rab-GAP-TBC_dom"/>
</dbReference>
<dbReference type="InterPro" id="IPR035969">
    <property type="entry name" value="Rab-GAP_TBC_sf"/>
</dbReference>
<dbReference type="InterPro" id="IPR021935">
    <property type="entry name" value="SGSM1/2_RBD"/>
</dbReference>
<dbReference type="PANTHER" id="PTHR22957:SF502">
    <property type="entry name" value="SMALL G PROTEIN SIGNALING MODULATOR 2-RELATED"/>
    <property type="match status" value="1"/>
</dbReference>
<dbReference type="PANTHER" id="PTHR22957">
    <property type="entry name" value="TBC1 DOMAIN FAMILY MEMBER GTPASE-ACTIVATING PROTEIN"/>
    <property type="match status" value="1"/>
</dbReference>
<dbReference type="Pfam" id="PF12068">
    <property type="entry name" value="PH_RBD"/>
    <property type="match status" value="1"/>
</dbReference>
<dbReference type="Pfam" id="PF00566">
    <property type="entry name" value="RabGAP-TBC"/>
    <property type="match status" value="1"/>
</dbReference>
<dbReference type="SMART" id="SM00164">
    <property type="entry name" value="TBC"/>
    <property type="match status" value="1"/>
</dbReference>
<dbReference type="SUPFAM" id="SSF47923">
    <property type="entry name" value="Ypt/Rab-GAP domain of gyp1p"/>
    <property type="match status" value="2"/>
</dbReference>
<dbReference type="PROSITE" id="PS50086">
    <property type="entry name" value="TBC_RABGAP"/>
    <property type="match status" value="1"/>
</dbReference>
<feature type="chain" id="PRO_0000208016" description="GTPase-activating protein GYP7">
    <location>
        <begin position="1"/>
        <end position="730"/>
    </location>
</feature>
<feature type="domain" description="Rab-GAP TBC" evidence="2">
    <location>
        <begin position="434"/>
        <end position="619"/>
    </location>
</feature>
<feature type="sequence conflict" description="In Ref. 3; AAA35241." evidence="3" ref="3">
    <original>R</original>
    <variation>L</variation>
    <location>
        <position position="500"/>
    </location>
</feature>
<organism>
    <name type="scientific">Yarrowia lipolytica (strain CLIB 122 / E 150)</name>
    <name type="common">Yeast</name>
    <name type="synonym">Candida lipolytica</name>
    <dbReference type="NCBI Taxonomy" id="284591"/>
    <lineage>
        <taxon>Eukaryota</taxon>
        <taxon>Fungi</taxon>
        <taxon>Dikarya</taxon>
        <taxon>Ascomycota</taxon>
        <taxon>Saccharomycotina</taxon>
        <taxon>Dipodascomycetes</taxon>
        <taxon>Dipodascales</taxon>
        <taxon>Dipodascales incertae sedis</taxon>
        <taxon>Yarrowia</taxon>
    </lineage>
</organism>
<reference key="1">
    <citation type="journal article" date="1999" name="Eur. J. Biochem.">
        <title>Primary structure and biochemical characterization of yeast GTPase-activating proteins with substrate preference for the transport GTPase Ypt7p.</title>
        <authorList>
            <person name="Vollmer P."/>
            <person name="Will E."/>
            <person name="Scheglmann D."/>
            <person name="Strom M."/>
            <person name="Gallwitz D."/>
        </authorList>
    </citation>
    <scope>NUCLEOTIDE SEQUENCE [GENOMIC DNA]</scope>
    <source>
        <strain>ATCC MYA-165 / 12-K335</strain>
    </source>
</reference>
<reference key="2">
    <citation type="journal article" date="2004" name="Nature">
        <title>Genome evolution in yeasts.</title>
        <authorList>
            <person name="Dujon B."/>
            <person name="Sherman D."/>
            <person name="Fischer G."/>
            <person name="Durrens P."/>
            <person name="Casaregola S."/>
            <person name="Lafontaine I."/>
            <person name="de Montigny J."/>
            <person name="Marck C."/>
            <person name="Neuveglise C."/>
            <person name="Talla E."/>
            <person name="Goffard N."/>
            <person name="Frangeul L."/>
            <person name="Aigle M."/>
            <person name="Anthouard V."/>
            <person name="Babour A."/>
            <person name="Barbe V."/>
            <person name="Barnay S."/>
            <person name="Blanchin S."/>
            <person name="Beckerich J.-M."/>
            <person name="Beyne E."/>
            <person name="Bleykasten C."/>
            <person name="Boisrame A."/>
            <person name="Boyer J."/>
            <person name="Cattolico L."/>
            <person name="Confanioleri F."/>
            <person name="de Daruvar A."/>
            <person name="Despons L."/>
            <person name="Fabre E."/>
            <person name="Fairhead C."/>
            <person name="Ferry-Dumazet H."/>
            <person name="Groppi A."/>
            <person name="Hantraye F."/>
            <person name="Hennequin C."/>
            <person name="Jauniaux N."/>
            <person name="Joyet P."/>
            <person name="Kachouri R."/>
            <person name="Kerrest A."/>
            <person name="Koszul R."/>
            <person name="Lemaire M."/>
            <person name="Lesur I."/>
            <person name="Ma L."/>
            <person name="Muller H."/>
            <person name="Nicaud J.-M."/>
            <person name="Nikolski M."/>
            <person name="Oztas S."/>
            <person name="Ozier-Kalogeropoulos O."/>
            <person name="Pellenz S."/>
            <person name="Potier S."/>
            <person name="Richard G.-F."/>
            <person name="Straub M.-L."/>
            <person name="Suleau A."/>
            <person name="Swennen D."/>
            <person name="Tekaia F."/>
            <person name="Wesolowski-Louvel M."/>
            <person name="Westhof E."/>
            <person name="Wirth B."/>
            <person name="Zeniou-Meyer M."/>
            <person name="Zivanovic Y."/>
            <person name="Bolotin-Fukuhara M."/>
            <person name="Thierry A."/>
            <person name="Bouchier C."/>
            <person name="Caudron B."/>
            <person name="Scarpelli C."/>
            <person name="Gaillardin C."/>
            <person name="Weissenbach J."/>
            <person name="Wincker P."/>
            <person name="Souciet J.-L."/>
        </authorList>
    </citation>
    <scope>NUCLEOTIDE SEQUENCE [LARGE SCALE GENOMIC DNA]</scope>
    <source>
        <strain>CLIB 122 / E 150</strain>
    </source>
</reference>
<reference key="3">
    <citation type="journal article" date="1987" name="J. Bacteriol.">
        <title>Cloning and sequencing of the alkaline extracellular protease gene of Yarrowia lipolytica.</title>
        <authorList>
            <person name="Davidow L.S."/>
            <person name="O'Donnell M.M."/>
            <person name="Kaczmarek F.S."/>
            <person name="Pereira D.A."/>
            <person name="Dezeeuw J.R."/>
            <person name="Franke A.E."/>
        </authorList>
    </citation>
    <scope>NUCLEOTIDE SEQUENCE [GENOMIC DNA] OF 420-730</scope>
</reference>
<accession>P09379</accession>
<accession>O14440</accession>
<accession>Q6BZP9</accession>